<comment type="induction">
    <text evidence="1">Up-regulated by the oxygen-responsive transcription factor FNR under anaerobic conditions. Repressed in the presence of nitrate or nitrite via the two-component systems NarXL and NarPQ, respectively.</text>
</comment>
<evidence type="ECO:0000269" key="1">
    <source>
    </source>
</evidence>
<accession>P77147</accession>
<name>YDHT_ECOLI</name>
<feature type="chain" id="PRO_0000168979" description="Uncharacterized protein YdhT">
    <location>
        <begin position="1"/>
        <end position="270"/>
    </location>
</feature>
<reference key="1">
    <citation type="journal article" date="1997" name="J. Bacteriol.">
        <title>Analysis of the boundaries of Salmonella pathogenicity island 2 and the corresponding chromosomal region of Escherichia coli K-12.</title>
        <authorList>
            <person name="Hensel M."/>
            <person name="Shea J.E."/>
            <person name="Baeumler A.J."/>
            <person name="Gleeson C."/>
            <person name="Blattner F.R."/>
            <person name="Holden D.W."/>
        </authorList>
    </citation>
    <scope>NUCLEOTIDE SEQUENCE [GENOMIC DNA]</scope>
    <source>
        <strain>K12 / MG1655 / ATCC 47076</strain>
    </source>
</reference>
<reference key="2">
    <citation type="journal article" date="1996" name="DNA Res.">
        <title>A 570-kb DNA sequence of the Escherichia coli K-12 genome corresponding to the 28.0-40.1 min region on the linkage map.</title>
        <authorList>
            <person name="Aiba H."/>
            <person name="Baba T."/>
            <person name="Fujita K."/>
            <person name="Hayashi K."/>
            <person name="Inada T."/>
            <person name="Isono K."/>
            <person name="Itoh T."/>
            <person name="Kasai H."/>
            <person name="Kashimoto K."/>
            <person name="Kimura S."/>
            <person name="Kitakawa M."/>
            <person name="Kitagawa M."/>
            <person name="Makino K."/>
            <person name="Miki T."/>
            <person name="Mizobuchi K."/>
            <person name="Mori H."/>
            <person name="Mori T."/>
            <person name="Motomura K."/>
            <person name="Nakade S."/>
            <person name="Nakamura Y."/>
            <person name="Nashimoto H."/>
            <person name="Nishio Y."/>
            <person name="Oshima T."/>
            <person name="Saito N."/>
            <person name="Sampei G."/>
            <person name="Seki Y."/>
            <person name="Sivasundaram S."/>
            <person name="Tagami H."/>
            <person name="Takeda J."/>
            <person name="Takemoto K."/>
            <person name="Takeuchi Y."/>
            <person name="Wada C."/>
            <person name="Yamamoto Y."/>
            <person name="Horiuchi T."/>
        </authorList>
    </citation>
    <scope>NUCLEOTIDE SEQUENCE [LARGE SCALE GENOMIC DNA]</scope>
    <source>
        <strain>K12 / W3110 / ATCC 27325 / DSM 5911</strain>
    </source>
</reference>
<reference key="3">
    <citation type="journal article" date="1997" name="Science">
        <title>The complete genome sequence of Escherichia coli K-12.</title>
        <authorList>
            <person name="Blattner F.R."/>
            <person name="Plunkett G. III"/>
            <person name="Bloch C.A."/>
            <person name="Perna N.T."/>
            <person name="Burland V."/>
            <person name="Riley M."/>
            <person name="Collado-Vides J."/>
            <person name="Glasner J.D."/>
            <person name="Rode C.K."/>
            <person name="Mayhew G.F."/>
            <person name="Gregor J."/>
            <person name="Davis N.W."/>
            <person name="Kirkpatrick H.A."/>
            <person name="Goeden M.A."/>
            <person name="Rose D.J."/>
            <person name="Mau B."/>
            <person name="Shao Y."/>
        </authorList>
    </citation>
    <scope>NUCLEOTIDE SEQUENCE [LARGE SCALE GENOMIC DNA]</scope>
    <source>
        <strain>K12 / MG1655 / ATCC 47076</strain>
    </source>
</reference>
<reference key="4">
    <citation type="journal article" date="2006" name="Mol. Syst. Biol.">
        <title>Highly accurate genome sequences of Escherichia coli K-12 strains MG1655 and W3110.</title>
        <authorList>
            <person name="Hayashi K."/>
            <person name="Morooka N."/>
            <person name="Yamamoto Y."/>
            <person name="Fujita K."/>
            <person name="Isono K."/>
            <person name="Choi S."/>
            <person name="Ohtsubo E."/>
            <person name="Baba T."/>
            <person name="Wanner B.L."/>
            <person name="Mori H."/>
            <person name="Horiuchi T."/>
        </authorList>
    </citation>
    <scope>NUCLEOTIDE SEQUENCE [LARGE SCALE GENOMIC DNA]</scope>
    <source>
        <strain>K12 / W3110 / ATCC 27325 / DSM 5911</strain>
    </source>
</reference>
<reference key="5">
    <citation type="journal article" date="2008" name="Microbiology">
        <title>Characterization of the Escherichia coli K-12 ydhYVWXUT operon: regulation by FNR, NarL and NarP.</title>
        <authorList>
            <person name="Partridge J.D."/>
            <person name="Browning D.F."/>
            <person name="Xu M."/>
            <person name="Newnham L.J."/>
            <person name="Scott C."/>
            <person name="Roberts R.E."/>
            <person name="Poole R.K."/>
            <person name="Green J."/>
        </authorList>
    </citation>
    <scope>INDUCTION</scope>
    <source>
        <strain>K12</strain>
    </source>
</reference>
<proteinExistence type="evidence at transcript level"/>
<keyword id="KW-1185">Reference proteome</keyword>
<protein>
    <recommendedName>
        <fullName>Uncharacterized protein YdhT</fullName>
    </recommendedName>
</protein>
<organism>
    <name type="scientific">Escherichia coli (strain K12)</name>
    <dbReference type="NCBI Taxonomy" id="83333"/>
    <lineage>
        <taxon>Bacteria</taxon>
        <taxon>Pseudomonadati</taxon>
        <taxon>Pseudomonadota</taxon>
        <taxon>Gammaproteobacteria</taxon>
        <taxon>Enterobacterales</taxon>
        <taxon>Enterobacteriaceae</taxon>
        <taxon>Escherichia</taxon>
    </lineage>
</organism>
<dbReference type="EMBL" id="U68703">
    <property type="protein sequence ID" value="AAB47945.1"/>
    <property type="molecule type" value="Genomic_DNA"/>
</dbReference>
<dbReference type="EMBL" id="U00096">
    <property type="protein sequence ID" value="AAC74739.1"/>
    <property type="molecule type" value="Genomic_DNA"/>
</dbReference>
<dbReference type="EMBL" id="AP009048">
    <property type="protein sequence ID" value="BAA15441.1"/>
    <property type="molecule type" value="Genomic_DNA"/>
</dbReference>
<dbReference type="PIR" id="E64924">
    <property type="entry name" value="E64924"/>
</dbReference>
<dbReference type="RefSeq" id="NP_416184.1">
    <property type="nucleotide sequence ID" value="NC_000913.3"/>
</dbReference>
<dbReference type="RefSeq" id="WP_000587525.1">
    <property type="nucleotide sequence ID" value="NZ_LN832404.1"/>
</dbReference>
<dbReference type="BioGRID" id="4260263">
    <property type="interactions" value="11"/>
</dbReference>
<dbReference type="DIP" id="DIP-11739N"/>
<dbReference type="FunCoup" id="P77147">
    <property type="interactions" value="134"/>
</dbReference>
<dbReference type="IntAct" id="P77147">
    <property type="interactions" value="3"/>
</dbReference>
<dbReference type="STRING" id="511145.b1669"/>
<dbReference type="PaxDb" id="511145-b1669"/>
<dbReference type="EnsemblBacteria" id="AAC74739">
    <property type="protein sequence ID" value="AAC74739"/>
    <property type="gene ID" value="b1669"/>
</dbReference>
<dbReference type="GeneID" id="945960"/>
<dbReference type="KEGG" id="ecj:JW1659"/>
<dbReference type="KEGG" id="eco:b1669"/>
<dbReference type="KEGG" id="ecoc:C3026_09570"/>
<dbReference type="PATRIC" id="fig|511145.12.peg.1740"/>
<dbReference type="EchoBASE" id="EB3712"/>
<dbReference type="eggNOG" id="ENOG502Z9MR">
    <property type="taxonomic scope" value="Bacteria"/>
</dbReference>
<dbReference type="HOGENOM" id="CLU_089922_0_0_6"/>
<dbReference type="InParanoid" id="P77147"/>
<dbReference type="OMA" id="ATGYKGH"/>
<dbReference type="OrthoDB" id="8456222at2"/>
<dbReference type="BioCyc" id="EcoCyc:G6897-MONOMER"/>
<dbReference type="PRO" id="PR:P77147"/>
<dbReference type="Proteomes" id="UP000000625">
    <property type="component" value="Chromosome"/>
</dbReference>
<dbReference type="NCBIfam" id="NF007410">
    <property type="entry name" value="PRK09946.1"/>
    <property type="match status" value="1"/>
</dbReference>
<gene>
    <name type="primary">ydhT</name>
    <name type="ordered locus">b1669</name>
    <name type="ordered locus">JW1659</name>
</gene>
<sequence length="270" mass="29341">MIITQADLREWRIGAVMYRWFLRHFPRGGSYADIHHALIEEGYTDWAESLVEYAWKKWLADENFAHQEVSSMQKLATDPGERPFCSQFARSDDHARIGCCEDNARIATAGYAAQIASMGYSVRIGSVGFNSHIGSSGERARVAVTGNSSRISSAGDSSRIANTGMRVRVCTLGERCHVASNGDLVQIASFGANARIANSGDNVHIIASGENSTVVSTGVVDSIILGPGGSAALAYHDGERVRFAVAIEGENNIRAGVRYRLNEQHQFVEC</sequence>